<gene>
    <name evidence="1" type="primary">btuF</name>
    <name type="ordered locus">STY0228</name>
    <name type="ordered locus">t0207</name>
</gene>
<keyword id="KW-1015">Disulfide bond</keyword>
<keyword id="KW-0574">Periplasm</keyword>
<keyword id="KW-0732">Signal</keyword>
<keyword id="KW-0813">Transport</keyword>
<reference key="1">
    <citation type="journal article" date="2001" name="Nature">
        <title>Complete genome sequence of a multiple drug resistant Salmonella enterica serovar Typhi CT18.</title>
        <authorList>
            <person name="Parkhill J."/>
            <person name="Dougan G."/>
            <person name="James K.D."/>
            <person name="Thomson N.R."/>
            <person name="Pickard D."/>
            <person name="Wain J."/>
            <person name="Churcher C.M."/>
            <person name="Mungall K.L."/>
            <person name="Bentley S.D."/>
            <person name="Holden M.T.G."/>
            <person name="Sebaihia M."/>
            <person name="Baker S."/>
            <person name="Basham D."/>
            <person name="Brooks K."/>
            <person name="Chillingworth T."/>
            <person name="Connerton P."/>
            <person name="Cronin A."/>
            <person name="Davis P."/>
            <person name="Davies R.M."/>
            <person name="Dowd L."/>
            <person name="White N."/>
            <person name="Farrar J."/>
            <person name="Feltwell T."/>
            <person name="Hamlin N."/>
            <person name="Haque A."/>
            <person name="Hien T.T."/>
            <person name="Holroyd S."/>
            <person name="Jagels K."/>
            <person name="Krogh A."/>
            <person name="Larsen T.S."/>
            <person name="Leather S."/>
            <person name="Moule S."/>
            <person name="O'Gaora P."/>
            <person name="Parry C."/>
            <person name="Quail M.A."/>
            <person name="Rutherford K.M."/>
            <person name="Simmonds M."/>
            <person name="Skelton J."/>
            <person name="Stevens K."/>
            <person name="Whitehead S."/>
            <person name="Barrell B.G."/>
        </authorList>
    </citation>
    <scope>NUCLEOTIDE SEQUENCE [LARGE SCALE GENOMIC DNA]</scope>
    <source>
        <strain>CT18</strain>
    </source>
</reference>
<reference key="2">
    <citation type="journal article" date="2003" name="J. Bacteriol.">
        <title>Comparative genomics of Salmonella enterica serovar Typhi strains Ty2 and CT18.</title>
        <authorList>
            <person name="Deng W."/>
            <person name="Liou S.-R."/>
            <person name="Plunkett G. III"/>
            <person name="Mayhew G.F."/>
            <person name="Rose D.J."/>
            <person name="Burland V."/>
            <person name="Kodoyianni V."/>
            <person name="Schwartz D.C."/>
            <person name="Blattner F.R."/>
        </authorList>
    </citation>
    <scope>NUCLEOTIDE SEQUENCE [LARGE SCALE GENOMIC DNA]</scope>
    <source>
        <strain>ATCC 700931 / Ty2</strain>
    </source>
</reference>
<dbReference type="EMBL" id="AL513382">
    <property type="protein sequence ID" value="CAD01360.1"/>
    <property type="molecule type" value="Genomic_DNA"/>
</dbReference>
<dbReference type="EMBL" id="AE014613">
    <property type="protein sequence ID" value="AAO67938.1"/>
    <property type="molecule type" value="Genomic_DNA"/>
</dbReference>
<dbReference type="RefSeq" id="NP_454814.1">
    <property type="nucleotide sequence ID" value="NC_003198.1"/>
</dbReference>
<dbReference type="RefSeq" id="WP_001118833.1">
    <property type="nucleotide sequence ID" value="NZ_WSUR01000009.1"/>
</dbReference>
<dbReference type="SMR" id="Q8Z9B2"/>
<dbReference type="STRING" id="220341.gene:17584262"/>
<dbReference type="KEGG" id="stt:t0207"/>
<dbReference type="KEGG" id="sty:STY0228"/>
<dbReference type="PATRIC" id="fig|220341.7.peg.229"/>
<dbReference type="eggNOG" id="COG0614">
    <property type="taxonomic scope" value="Bacteria"/>
</dbReference>
<dbReference type="HOGENOM" id="CLU_038034_2_5_6"/>
<dbReference type="OMA" id="WQGINLE"/>
<dbReference type="OrthoDB" id="6495095at2"/>
<dbReference type="Proteomes" id="UP000000541">
    <property type="component" value="Chromosome"/>
</dbReference>
<dbReference type="Proteomes" id="UP000002670">
    <property type="component" value="Chromosome"/>
</dbReference>
<dbReference type="GO" id="GO:0042597">
    <property type="term" value="C:periplasmic space"/>
    <property type="evidence" value="ECO:0007669"/>
    <property type="project" value="UniProtKB-SubCell"/>
</dbReference>
<dbReference type="GO" id="GO:0031419">
    <property type="term" value="F:cobalamin binding"/>
    <property type="evidence" value="ECO:0007669"/>
    <property type="project" value="InterPro"/>
</dbReference>
<dbReference type="GO" id="GO:0015889">
    <property type="term" value="P:cobalamin transport"/>
    <property type="evidence" value="ECO:0007669"/>
    <property type="project" value="UniProtKB-UniRule"/>
</dbReference>
<dbReference type="CDD" id="cd01144">
    <property type="entry name" value="BtuF"/>
    <property type="match status" value="1"/>
</dbReference>
<dbReference type="Gene3D" id="3.40.50.1980">
    <property type="entry name" value="Nitrogenase molybdenum iron protein domain"/>
    <property type="match status" value="2"/>
</dbReference>
<dbReference type="HAMAP" id="MF_01000">
    <property type="entry name" value="BtuF"/>
    <property type="match status" value="1"/>
</dbReference>
<dbReference type="InterPro" id="IPR050902">
    <property type="entry name" value="ABC_Transporter_SBP"/>
</dbReference>
<dbReference type="InterPro" id="IPR002491">
    <property type="entry name" value="ABC_transptr_periplasmic_BD"/>
</dbReference>
<dbReference type="InterPro" id="IPR023544">
    <property type="entry name" value="ABC_transptr_vit_B12-bd"/>
</dbReference>
<dbReference type="InterPro" id="IPR054828">
    <property type="entry name" value="Vit_B12_bind_prot"/>
</dbReference>
<dbReference type="NCBIfam" id="NF002894">
    <property type="entry name" value="PRK03379.1"/>
    <property type="match status" value="1"/>
</dbReference>
<dbReference type="NCBIfam" id="NF038402">
    <property type="entry name" value="TroA_like"/>
    <property type="match status" value="1"/>
</dbReference>
<dbReference type="PANTHER" id="PTHR30535:SF34">
    <property type="entry name" value="MOLYBDATE-BINDING PROTEIN MOLA"/>
    <property type="match status" value="1"/>
</dbReference>
<dbReference type="PANTHER" id="PTHR30535">
    <property type="entry name" value="VITAMIN B12-BINDING PROTEIN"/>
    <property type="match status" value="1"/>
</dbReference>
<dbReference type="Pfam" id="PF01497">
    <property type="entry name" value="Peripla_BP_2"/>
    <property type="match status" value="1"/>
</dbReference>
<dbReference type="SUPFAM" id="SSF53807">
    <property type="entry name" value="Helical backbone' metal receptor"/>
    <property type="match status" value="1"/>
</dbReference>
<dbReference type="PROSITE" id="PS50983">
    <property type="entry name" value="FE_B12_PBP"/>
    <property type="match status" value="1"/>
</dbReference>
<name>BTUF_SALTI</name>
<feature type="signal peptide" evidence="1">
    <location>
        <begin position="1"/>
        <end position="22"/>
    </location>
</feature>
<feature type="chain" id="PRO_0000003505" description="Vitamin B12-binding protein">
    <location>
        <begin position="23"/>
        <end position="266"/>
    </location>
</feature>
<feature type="domain" description="Fe/B12 periplasmic-binding" evidence="1">
    <location>
        <begin position="25"/>
        <end position="266"/>
    </location>
</feature>
<feature type="binding site" evidence="1">
    <location>
        <position position="50"/>
    </location>
    <ligand>
        <name>cyanocob(III)alamin</name>
        <dbReference type="ChEBI" id="CHEBI:17439"/>
    </ligand>
</feature>
<feature type="binding site" evidence="1">
    <location>
        <begin position="242"/>
        <end position="246"/>
    </location>
    <ligand>
        <name>cyanocob(III)alamin</name>
        <dbReference type="ChEBI" id="CHEBI:17439"/>
    </ligand>
</feature>
<feature type="site" description="Important for BtuC binding" evidence="1">
    <location>
        <position position="72"/>
    </location>
</feature>
<feature type="site" description="Important for BtuC binding" evidence="1">
    <location>
        <position position="202"/>
    </location>
</feature>
<feature type="disulfide bond" evidence="1">
    <location>
        <begin position="183"/>
        <end position="259"/>
    </location>
</feature>
<proteinExistence type="inferred from homology"/>
<comment type="function">
    <text evidence="1">Part of the ABC transporter complex BtuCDF involved in vitamin B12 import. Binds vitamin B12 and delivers it to the periplasmic surface of BtuC.</text>
</comment>
<comment type="subunit">
    <text evidence="1">The complex is composed of two ATP-binding proteins (BtuD), two transmembrane proteins (BtuC) and a solute-binding protein (BtuF).</text>
</comment>
<comment type="subcellular location">
    <subcellularLocation>
        <location evidence="1">Periplasm</location>
    </subcellularLocation>
</comment>
<comment type="similarity">
    <text evidence="1">Belongs to the BtuF family.</text>
</comment>
<evidence type="ECO:0000255" key="1">
    <source>
        <dbReference type="HAMAP-Rule" id="MF_01000"/>
    </source>
</evidence>
<sequence length="266" mass="29340">MAKQMFRALGALLLTLPVWLYAAPRVITLSPANTELAFAAEITPVGVSSYSDYPPEAQKIEQVSTWQGMNLERIVALKPDLVVAWRGGNAERQVNQLTSLGIKVMWVDAVTIEQIADALRQLAAWSPQPEKAQQAAQTLLKEYAALKVEYAGKAKKRVFLQFGMNPLFTSGKGSIQHQVLTTCGGENVFADSRVPWPQVSREQVLARHPQAIIVAGKAGEILKIEQYWGNLLKIPVIPLNSDWFERASPRIILAAKQLCNALSQVN</sequence>
<accession>Q8Z9B2</accession>
<organism>
    <name type="scientific">Salmonella typhi</name>
    <dbReference type="NCBI Taxonomy" id="90370"/>
    <lineage>
        <taxon>Bacteria</taxon>
        <taxon>Pseudomonadati</taxon>
        <taxon>Pseudomonadota</taxon>
        <taxon>Gammaproteobacteria</taxon>
        <taxon>Enterobacterales</taxon>
        <taxon>Enterobacteriaceae</taxon>
        <taxon>Salmonella</taxon>
    </lineage>
</organism>
<protein>
    <recommendedName>
        <fullName evidence="1">Vitamin B12-binding protein</fullName>
    </recommendedName>
</protein>